<protein>
    <recommendedName>
        <fullName>Bifunctional NAD(P)H-hydrate repair enzyme Nnr</fullName>
    </recommendedName>
    <alternativeName>
        <fullName>Nicotinamide nucleotide repair protein</fullName>
    </alternativeName>
    <domain>
        <recommendedName>
            <fullName>ADP-dependent (S)-NAD(P)H-hydrate dehydratase</fullName>
            <ecNumber>4.2.1.136</ecNumber>
        </recommendedName>
        <alternativeName>
            <fullName>ADP-dependent NAD(P)HX dehydratase</fullName>
        </alternativeName>
    </domain>
    <domain>
        <recommendedName>
            <fullName>NAD(P)H-hydrate epimerase</fullName>
            <ecNumber>5.1.99.6</ecNumber>
        </recommendedName>
        <alternativeName>
            <fullName>NAD(P)HX epimerase</fullName>
        </alternativeName>
    </domain>
</protein>
<dbReference type="EC" id="4.2.1.136"/>
<dbReference type="EC" id="5.1.99.6"/>
<dbReference type="EMBL" id="AE003853">
    <property type="protein sequence ID" value="AAF96104.1"/>
    <property type="molecule type" value="Genomic_DNA"/>
</dbReference>
<dbReference type="PIR" id="H82489">
    <property type="entry name" value="H82489"/>
</dbReference>
<dbReference type="RefSeq" id="NP_232591.1">
    <property type="nucleotide sequence ID" value="NC_002506.1"/>
</dbReference>
<dbReference type="SMR" id="Q9KMX5"/>
<dbReference type="STRING" id="243277.VC_A0191"/>
<dbReference type="DNASU" id="2611829"/>
<dbReference type="EnsemblBacteria" id="AAF96104">
    <property type="protein sequence ID" value="AAF96104"/>
    <property type="gene ID" value="VC_A0191"/>
</dbReference>
<dbReference type="KEGG" id="vch:VC_A0191"/>
<dbReference type="PATRIC" id="fig|243277.26.peg.2829"/>
<dbReference type="eggNOG" id="COG0062">
    <property type="taxonomic scope" value="Bacteria"/>
</dbReference>
<dbReference type="eggNOG" id="COG0063">
    <property type="taxonomic scope" value="Bacteria"/>
</dbReference>
<dbReference type="HOGENOM" id="CLU_024853_4_3_6"/>
<dbReference type="Proteomes" id="UP000000584">
    <property type="component" value="Chromosome 2"/>
</dbReference>
<dbReference type="GO" id="GO:0052855">
    <property type="term" value="F:ADP-dependent NAD(P)H-hydrate dehydratase activity"/>
    <property type="evidence" value="ECO:0000318"/>
    <property type="project" value="GO_Central"/>
</dbReference>
<dbReference type="GO" id="GO:0005524">
    <property type="term" value="F:ATP binding"/>
    <property type="evidence" value="ECO:0007669"/>
    <property type="project" value="UniProtKB-KW"/>
</dbReference>
<dbReference type="GO" id="GO:0046872">
    <property type="term" value="F:metal ion binding"/>
    <property type="evidence" value="ECO:0007669"/>
    <property type="project" value="UniProtKB-KW"/>
</dbReference>
<dbReference type="GO" id="GO:0052856">
    <property type="term" value="F:NAD(P)HX epimerase activity"/>
    <property type="evidence" value="ECO:0000318"/>
    <property type="project" value="GO_Central"/>
</dbReference>
<dbReference type="GO" id="GO:0110051">
    <property type="term" value="P:metabolite repair"/>
    <property type="evidence" value="ECO:0000318"/>
    <property type="project" value="GO_Central"/>
</dbReference>
<dbReference type="GO" id="GO:0046496">
    <property type="term" value="P:nicotinamide nucleotide metabolic process"/>
    <property type="evidence" value="ECO:0007669"/>
    <property type="project" value="UniProtKB-UniRule"/>
</dbReference>
<dbReference type="CDD" id="cd01171">
    <property type="entry name" value="YXKO-related"/>
    <property type="match status" value="1"/>
</dbReference>
<dbReference type="FunFam" id="3.40.1190.20:FF:000017">
    <property type="entry name" value="Multifunctional fusion protein"/>
    <property type="match status" value="1"/>
</dbReference>
<dbReference type="FunFam" id="3.40.50.10260:FF:000003">
    <property type="entry name" value="Multifunctional fusion protein"/>
    <property type="match status" value="1"/>
</dbReference>
<dbReference type="Gene3D" id="3.40.1190.20">
    <property type="match status" value="1"/>
</dbReference>
<dbReference type="Gene3D" id="3.40.50.10260">
    <property type="entry name" value="YjeF N-terminal domain"/>
    <property type="match status" value="1"/>
</dbReference>
<dbReference type="HAMAP" id="MF_01965">
    <property type="entry name" value="NADHX_dehydratase"/>
    <property type="match status" value="1"/>
</dbReference>
<dbReference type="HAMAP" id="MF_01966">
    <property type="entry name" value="NADHX_epimerase"/>
    <property type="match status" value="1"/>
</dbReference>
<dbReference type="InterPro" id="IPR017953">
    <property type="entry name" value="Carbohydrate_kinase_pred_CS"/>
</dbReference>
<dbReference type="InterPro" id="IPR000631">
    <property type="entry name" value="CARKD"/>
</dbReference>
<dbReference type="InterPro" id="IPR030677">
    <property type="entry name" value="Nnr"/>
</dbReference>
<dbReference type="InterPro" id="IPR029056">
    <property type="entry name" value="Ribokinase-like"/>
</dbReference>
<dbReference type="InterPro" id="IPR004443">
    <property type="entry name" value="YjeF_N_dom"/>
</dbReference>
<dbReference type="InterPro" id="IPR036652">
    <property type="entry name" value="YjeF_N_dom_sf"/>
</dbReference>
<dbReference type="NCBIfam" id="TIGR00196">
    <property type="entry name" value="yjeF_cterm"/>
    <property type="match status" value="1"/>
</dbReference>
<dbReference type="NCBIfam" id="TIGR00197">
    <property type="entry name" value="yjeF_nterm"/>
    <property type="match status" value="1"/>
</dbReference>
<dbReference type="PANTHER" id="PTHR12592:SF0">
    <property type="entry name" value="ATP-DEPENDENT (S)-NAD(P)H-HYDRATE DEHYDRATASE"/>
    <property type="match status" value="1"/>
</dbReference>
<dbReference type="PANTHER" id="PTHR12592">
    <property type="entry name" value="ATP-DEPENDENT (S)-NAD(P)H-HYDRATE DEHYDRATASE FAMILY MEMBER"/>
    <property type="match status" value="1"/>
</dbReference>
<dbReference type="Pfam" id="PF01256">
    <property type="entry name" value="Carb_kinase"/>
    <property type="match status" value="1"/>
</dbReference>
<dbReference type="Pfam" id="PF03853">
    <property type="entry name" value="YjeF_N"/>
    <property type="match status" value="1"/>
</dbReference>
<dbReference type="PIRSF" id="PIRSF017184">
    <property type="entry name" value="Nnr"/>
    <property type="match status" value="1"/>
</dbReference>
<dbReference type="SUPFAM" id="SSF53613">
    <property type="entry name" value="Ribokinase-like"/>
    <property type="match status" value="1"/>
</dbReference>
<dbReference type="SUPFAM" id="SSF64153">
    <property type="entry name" value="YjeF N-terminal domain-like"/>
    <property type="match status" value="1"/>
</dbReference>
<dbReference type="PROSITE" id="PS01050">
    <property type="entry name" value="YJEF_C_2"/>
    <property type="match status" value="1"/>
</dbReference>
<dbReference type="PROSITE" id="PS51383">
    <property type="entry name" value="YJEF_C_3"/>
    <property type="match status" value="1"/>
</dbReference>
<dbReference type="PROSITE" id="PS51385">
    <property type="entry name" value="YJEF_N"/>
    <property type="match status" value="1"/>
</dbReference>
<evidence type="ECO:0000250" key="1"/>
<evidence type="ECO:0000305" key="2"/>
<sequence>MDTIMPLPTHFYTTQQLKQGEQDAASERGLELFHLMERAGQAVFTIAFAQYPTSHHWLICCGGGNNGGDGYIVAVLARHMGIDVTVWQLGDPEKLPADAHRAYQQWKELGGAVYAPQSEVPESTDVIIDALFGIGLKEVLRPQVVPLVELLNQSGKPIVAVDVPSGLCADTGQVMGTCIKAQHTVSLIGLKQGLVTGQARCYVGTLHYAGLGVEEVFAQHNTPSLVSIDGKLRHSLLPPRQACTHKGQNGKALIVGGNEGMGGALILCASACARSGAGLSAAMTHPDNVTAMLTITPEVMSTSWNKQHLFEERIEWCDALALGPGLGRDAQAQQIMQRLSSLKVPKVWDADALYFLAHNPSYDAQRIITPHPVEAARLLGCEVEEVEQDRFAAIRQLQQRYGGVVVLKGAGTLVDDGKEIAVCLQGNPGMASGGMGDVLTGIIVALLAQKIPLADAAKLGVWLHSSAADLNTKSHGQRGLLASDLLPHLRELLN</sequence>
<feature type="chain" id="PRO_0000416424" description="Bifunctional NAD(P)H-hydrate repair enzyme Nnr">
    <location>
        <begin position="1"/>
        <end position="494"/>
    </location>
</feature>
<feature type="domain" description="YjeF N-terminal">
    <location>
        <begin position="17"/>
        <end position="219"/>
    </location>
</feature>
<feature type="domain" description="YjeF C-terminal">
    <location>
        <begin position="229"/>
        <end position="494"/>
    </location>
</feature>
<feature type="region of interest" description="NAD(P)H-hydrate epimerase" evidence="1">
    <location>
        <begin position="1"/>
        <end position="221"/>
    </location>
</feature>
<feature type="region of interest" description="NADPHX 1; for epimerase activity" evidence="1">
    <location>
        <begin position="65"/>
        <end position="69"/>
    </location>
</feature>
<feature type="region of interest" description="NADPHX 1; for epimerase activity" evidence="1">
    <location>
        <begin position="133"/>
        <end position="139"/>
    </location>
</feature>
<feature type="region of interest" description="ADP-dependent (S)-NAD(P)H-hydrate dehydratase" evidence="1">
    <location>
        <begin position="229"/>
        <end position="494"/>
    </location>
</feature>
<feature type="region of interest" description="NADPHX 2; for dehydratase activity" evidence="1">
    <location>
        <begin position="371"/>
        <end position="377"/>
    </location>
</feature>
<feature type="binding site" evidence="1">
    <location>
        <position position="66"/>
    </location>
    <ligand>
        <name>K(+)</name>
        <dbReference type="ChEBI" id="CHEBI:29103"/>
    </ligand>
</feature>
<feature type="binding site" evidence="1">
    <location>
        <position position="129"/>
    </location>
    <ligand>
        <name>K(+)</name>
        <dbReference type="ChEBI" id="CHEBI:29103"/>
    </ligand>
</feature>
<feature type="binding site" evidence="1">
    <location>
        <position position="162"/>
    </location>
    <ligand>
        <name>(6S)-NADPHX</name>
        <dbReference type="ChEBI" id="CHEBI:64076"/>
        <label>1</label>
        <note>for epimerase activity</note>
    </ligand>
</feature>
<feature type="binding site" evidence="1">
    <location>
        <position position="165"/>
    </location>
    <ligand>
        <name>K(+)</name>
        <dbReference type="ChEBI" id="CHEBI:29103"/>
    </ligand>
</feature>
<feature type="binding site" evidence="1">
    <location>
        <position position="325"/>
    </location>
    <ligand>
        <name>(6S)-NADPHX</name>
        <dbReference type="ChEBI" id="CHEBI:64076"/>
        <label>2</label>
        <note>for dehydratase activity</note>
    </ligand>
</feature>
<feature type="binding site" evidence="1">
    <location>
        <begin position="408"/>
        <end position="412"/>
    </location>
    <ligand>
        <name>ADP</name>
        <dbReference type="ChEBI" id="CHEBI:456216"/>
    </ligand>
</feature>
<feature type="binding site" evidence="1">
    <location>
        <begin position="427"/>
        <end position="436"/>
    </location>
    <ligand>
        <name>ADP</name>
        <dbReference type="ChEBI" id="CHEBI:456216"/>
    </ligand>
</feature>
<feature type="binding site" evidence="1">
    <location>
        <position position="437"/>
    </location>
    <ligand>
        <name>(6S)-NADPHX</name>
        <dbReference type="ChEBI" id="CHEBI:64076"/>
        <label>2</label>
        <note>for dehydratase activity</note>
    </ligand>
</feature>
<gene>
    <name type="primary">nnr</name>
    <name type="ordered locus">VC_A0191</name>
</gene>
<accession>Q9KMX5</accession>
<name>NNR_VIBCH</name>
<proteinExistence type="inferred from homology"/>
<keyword id="KW-0067">ATP-binding</keyword>
<keyword id="KW-0413">Isomerase</keyword>
<keyword id="KW-0456">Lyase</keyword>
<keyword id="KW-0479">Metal-binding</keyword>
<keyword id="KW-0511">Multifunctional enzyme</keyword>
<keyword id="KW-0520">NAD</keyword>
<keyword id="KW-0521">NADP</keyword>
<keyword id="KW-0547">Nucleotide-binding</keyword>
<keyword id="KW-0630">Potassium</keyword>
<keyword id="KW-1185">Reference proteome</keyword>
<organism>
    <name type="scientific">Vibrio cholerae serotype O1 (strain ATCC 39315 / El Tor Inaba N16961)</name>
    <dbReference type="NCBI Taxonomy" id="243277"/>
    <lineage>
        <taxon>Bacteria</taxon>
        <taxon>Pseudomonadati</taxon>
        <taxon>Pseudomonadota</taxon>
        <taxon>Gammaproteobacteria</taxon>
        <taxon>Vibrionales</taxon>
        <taxon>Vibrionaceae</taxon>
        <taxon>Vibrio</taxon>
    </lineage>
</organism>
<comment type="function">
    <text evidence="1">Bifunctional enzyme that catalyzes the epimerization of the S- and R-forms of NAD(P)HX and the dehydration of the S-form of NAD(P)HX at the expense of ADP, which is converted to AMP. This allows the repair of both epimers of NAD(P)HX, a damaged form of NAD(P)H that is a result of enzymatic or heat-dependent hydration (By similarity).</text>
</comment>
<comment type="catalytic activity">
    <reaction>
        <text>(6S)-NADHX + ADP = AMP + phosphate + NADH + H(+)</text>
        <dbReference type="Rhea" id="RHEA:32223"/>
        <dbReference type="ChEBI" id="CHEBI:15378"/>
        <dbReference type="ChEBI" id="CHEBI:43474"/>
        <dbReference type="ChEBI" id="CHEBI:57945"/>
        <dbReference type="ChEBI" id="CHEBI:64074"/>
        <dbReference type="ChEBI" id="CHEBI:456215"/>
        <dbReference type="ChEBI" id="CHEBI:456216"/>
        <dbReference type="EC" id="4.2.1.136"/>
    </reaction>
</comment>
<comment type="catalytic activity">
    <reaction>
        <text>(6S)-NADPHX + ADP = AMP + phosphate + NADPH + H(+)</text>
        <dbReference type="Rhea" id="RHEA:32235"/>
        <dbReference type="ChEBI" id="CHEBI:15378"/>
        <dbReference type="ChEBI" id="CHEBI:43474"/>
        <dbReference type="ChEBI" id="CHEBI:57783"/>
        <dbReference type="ChEBI" id="CHEBI:64076"/>
        <dbReference type="ChEBI" id="CHEBI:456215"/>
        <dbReference type="ChEBI" id="CHEBI:456216"/>
        <dbReference type="EC" id="4.2.1.136"/>
    </reaction>
</comment>
<comment type="catalytic activity">
    <reaction>
        <text>(6R)-NADHX = (6S)-NADHX</text>
        <dbReference type="Rhea" id="RHEA:32215"/>
        <dbReference type="ChEBI" id="CHEBI:64074"/>
        <dbReference type="ChEBI" id="CHEBI:64075"/>
        <dbReference type="EC" id="5.1.99.6"/>
    </reaction>
</comment>
<comment type="catalytic activity">
    <reaction>
        <text>(6R)-NADPHX = (6S)-NADPHX</text>
        <dbReference type="Rhea" id="RHEA:32227"/>
        <dbReference type="ChEBI" id="CHEBI:64076"/>
        <dbReference type="ChEBI" id="CHEBI:64077"/>
        <dbReference type="EC" id="5.1.99.6"/>
    </reaction>
</comment>
<comment type="cofactor">
    <cofactor evidence="1">
        <name>K(+)</name>
        <dbReference type="ChEBI" id="CHEBI:29103"/>
    </cofactor>
    <text evidence="1">Binds 1 potassium ion per subunit.</text>
</comment>
<comment type="similarity">
    <text evidence="2">In the N-terminal section; belongs to the NnrE/AIBP family.</text>
</comment>
<comment type="similarity">
    <text evidence="2">In the C-terminal section; belongs to the NnrD/CARKD family.</text>
</comment>
<reference key="1">
    <citation type="journal article" date="2000" name="Nature">
        <title>DNA sequence of both chromosomes of the cholera pathogen Vibrio cholerae.</title>
        <authorList>
            <person name="Heidelberg J.F."/>
            <person name="Eisen J.A."/>
            <person name="Nelson W.C."/>
            <person name="Clayton R.A."/>
            <person name="Gwinn M.L."/>
            <person name="Dodson R.J."/>
            <person name="Haft D.H."/>
            <person name="Hickey E.K."/>
            <person name="Peterson J.D."/>
            <person name="Umayam L.A."/>
            <person name="Gill S.R."/>
            <person name="Nelson K.E."/>
            <person name="Read T.D."/>
            <person name="Tettelin H."/>
            <person name="Richardson D.L."/>
            <person name="Ermolaeva M.D."/>
            <person name="Vamathevan J.J."/>
            <person name="Bass S."/>
            <person name="Qin H."/>
            <person name="Dragoi I."/>
            <person name="Sellers P."/>
            <person name="McDonald L.A."/>
            <person name="Utterback T.R."/>
            <person name="Fleischmann R.D."/>
            <person name="Nierman W.C."/>
            <person name="White O."/>
            <person name="Salzberg S.L."/>
            <person name="Smith H.O."/>
            <person name="Colwell R.R."/>
            <person name="Mekalanos J.J."/>
            <person name="Venter J.C."/>
            <person name="Fraser C.M."/>
        </authorList>
    </citation>
    <scope>NUCLEOTIDE SEQUENCE [LARGE SCALE GENOMIC DNA]</scope>
    <source>
        <strain>ATCC 39315 / El Tor Inaba N16961</strain>
    </source>
</reference>